<gene>
    <name evidence="1" type="primary">thiI</name>
    <name type="ordered locus">Spea_2986</name>
</gene>
<sequence>MKFIVKLFPEIMMKSKPVRMRFTKMLETNIRNVLKKVDETAKVQRQWDKIMVMVPDDRPDLVEAFAERLACIPGIAHVLQVNVSTFTTVDDIYQQTLVAYKEQLAGKTFCVRVKRAGKHDFNSIEVERYVGGGLNQFTEAAGVRLKNPDMTVHLEIDNDNLYLIDKRIEGLGGFPMATQEDVLSLISGGFDSGVSSYQFIKRGSRTHYCFFNLGGDQHEIGVKQVAYHLWQKYGESHKVKFISVPFDPVVQEILERIDNGQMGVILKRMMMRAATRVAQKMGIQALVTGEAMGQVSSQTLTNLNVIDRCTEQLILRPLIAMDKQDIINISRQIGTEDFAKSIPEYCGVISQKPTVKAVLAKVEAEEAKFSEDLLDRVIADAEIIDIKEIATQMDTKITATETVDAISAGEIIIDVRAPEEEEKSPLELDGVEVKAIPFFKLATQFADLDKEKNYLLYCDRGVMSKLQALYLQEQGYNNVKVYRP</sequence>
<feature type="chain" id="PRO_1000074270" description="tRNA sulfurtransferase">
    <location>
        <begin position="1"/>
        <end position="484"/>
    </location>
</feature>
<feature type="domain" description="THUMP" evidence="1">
    <location>
        <begin position="63"/>
        <end position="167"/>
    </location>
</feature>
<feature type="domain" description="Rhodanese" evidence="1">
    <location>
        <begin position="406"/>
        <end position="484"/>
    </location>
</feature>
<feature type="active site" description="Cysteine persulfide intermediate" evidence="1">
    <location>
        <position position="458"/>
    </location>
</feature>
<feature type="binding site" evidence="1">
    <location>
        <begin position="185"/>
        <end position="186"/>
    </location>
    <ligand>
        <name>ATP</name>
        <dbReference type="ChEBI" id="CHEBI:30616"/>
    </ligand>
</feature>
<feature type="binding site" evidence="1">
    <location>
        <position position="267"/>
    </location>
    <ligand>
        <name>ATP</name>
        <dbReference type="ChEBI" id="CHEBI:30616"/>
    </ligand>
</feature>
<feature type="binding site" evidence="1">
    <location>
        <position position="289"/>
    </location>
    <ligand>
        <name>ATP</name>
        <dbReference type="ChEBI" id="CHEBI:30616"/>
    </ligand>
</feature>
<feature type="binding site" evidence="1">
    <location>
        <position position="298"/>
    </location>
    <ligand>
        <name>ATP</name>
        <dbReference type="ChEBI" id="CHEBI:30616"/>
    </ligand>
</feature>
<feature type="disulfide bond" description="Redox-active" evidence="1">
    <location>
        <begin position="346"/>
        <end position="458"/>
    </location>
</feature>
<dbReference type="EC" id="2.8.1.4" evidence="1"/>
<dbReference type="EMBL" id="CP000851">
    <property type="protein sequence ID" value="ABV88303.1"/>
    <property type="molecule type" value="Genomic_DNA"/>
</dbReference>
<dbReference type="RefSeq" id="WP_012156207.1">
    <property type="nucleotide sequence ID" value="NC_009901.1"/>
</dbReference>
<dbReference type="SMR" id="A8H6W6"/>
<dbReference type="STRING" id="398579.Spea_2986"/>
<dbReference type="KEGG" id="spl:Spea_2986"/>
<dbReference type="eggNOG" id="COG0301">
    <property type="taxonomic scope" value="Bacteria"/>
</dbReference>
<dbReference type="eggNOG" id="COG0607">
    <property type="taxonomic scope" value="Bacteria"/>
</dbReference>
<dbReference type="HOGENOM" id="CLU_037952_4_1_6"/>
<dbReference type="OrthoDB" id="9773948at2"/>
<dbReference type="UniPathway" id="UPA00060"/>
<dbReference type="Proteomes" id="UP000002608">
    <property type="component" value="Chromosome"/>
</dbReference>
<dbReference type="GO" id="GO:0005829">
    <property type="term" value="C:cytosol"/>
    <property type="evidence" value="ECO:0007669"/>
    <property type="project" value="TreeGrafter"/>
</dbReference>
<dbReference type="GO" id="GO:0005524">
    <property type="term" value="F:ATP binding"/>
    <property type="evidence" value="ECO:0007669"/>
    <property type="project" value="UniProtKB-UniRule"/>
</dbReference>
<dbReference type="GO" id="GO:0004810">
    <property type="term" value="F:CCA tRNA nucleotidyltransferase activity"/>
    <property type="evidence" value="ECO:0007669"/>
    <property type="project" value="InterPro"/>
</dbReference>
<dbReference type="GO" id="GO:0000049">
    <property type="term" value="F:tRNA binding"/>
    <property type="evidence" value="ECO:0007669"/>
    <property type="project" value="UniProtKB-UniRule"/>
</dbReference>
<dbReference type="GO" id="GO:0140741">
    <property type="term" value="F:tRNA-uracil-4 sulfurtransferase activity"/>
    <property type="evidence" value="ECO:0007669"/>
    <property type="project" value="UniProtKB-EC"/>
</dbReference>
<dbReference type="GO" id="GO:0009228">
    <property type="term" value="P:thiamine biosynthetic process"/>
    <property type="evidence" value="ECO:0007669"/>
    <property type="project" value="UniProtKB-KW"/>
</dbReference>
<dbReference type="GO" id="GO:0009229">
    <property type="term" value="P:thiamine diphosphate biosynthetic process"/>
    <property type="evidence" value="ECO:0007669"/>
    <property type="project" value="UniProtKB-UniRule"/>
</dbReference>
<dbReference type="GO" id="GO:0052837">
    <property type="term" value="P:thiazole biosynthetic process"/>
    <property type="evidence" value="ECO:0007669"/>
    <property type="project" value="InterPro"/>
</dbReference>
<dbReference type="GO" id="GO:0002937">
    <property type="term" value="P:tRNA 4-thiouridine biosynthesis"/>
    <property type="evidence" value="ECO:0007669"/>
    <property type="project" value="TreeGrafter"/>
</dbReference>
<dbReference type="CDD" id="cd01712">
    <property type="entry name" value="PPase_ThiI"/>
    <property type="match status" value="1"/>
</dbReference>
<dbReference type="CDD" id="cd00158">
    <property type="entry name" value="RHOD"/>
    <property type="match status" value="1"/>
</dbReference>
<dbReference type="CDD" id="cd11716">
    <property type="entry name" value="THUMP_ThiI"/>
    <property type="match status" value="1"/>
</dbReference>
<dbReference type="FunFam" id="3.30.2130.30:FF:000002">
    <property type="entry name" value="tRNA sulfurtransferase"/>
    <property type="match status" value="1"/>
</dbReference>
<dbReference type="FunFam" id="3.40.50.620:FF:000029">
    <property type="entry name" value="tRNA sulfurtransferase"/>
    <property type="match status" value="1"/>
</dbReference>
<dbReference type="Gene3D" id="3.30.2130.30">
    <property type="match status" value="1"/>
</dbReference>
<dbReference type="Gene3D" id="3.40.50.620">
    <property type="entry name" value="HUPs"/>
    <property type="match status" value="1"/>
</dbReference>
<dbReference type="Gene3D" id="3.40.250.10">
    <property type="entry name" value="Rhodanese-like domain"/>
    <property type="match status" value="1"/>
</dbReference>
<dbReference type="HAMAP" id="MF_00021">
    <property type="entry name" value="ThiI"/>
    <property type="match status" value="1"/>
</dbReference>
<dbReference type="InterPro" id="IPR001763">
    <property type="entry name" value="Rhodanese-like_dom"/>
</dbReference>
<dbReference type="InterPro" id="IPR036873">
    <property type="entry name" value="Rhodanese-like_dom_sf"/>
</dbReference>
<dbReference type="InterPro" id="IPR014729">
    <property type="entry name" value="Rossmann-like_a/b/a_fold"/>
</dbReference>
<dbReference type="InterPro" id="IPR020536">
    <property type="entry name" value="ThiI_AANH"/>
</dbReference>
<dbReference type="InterPro" id="IPR054173">
    <property type="entry name" value="ThiI_fer"/>
</dbReference>
<dbReference type="InterPro" id="IPR049961">
    <property type="entry name" value="ThiI_N"/>
</dbReference>
<dbReference type="InterPro" id="IPR026340">
    <property type="entry name" value="THII_Thiazole_biosynth_dom"/>
</dbReference>
<dbReference type="InterPro" id="IPR004114">
    <property type="entry name" value="THUMP_dom"/>
</dbReference>
<dbReference type="InterPro" id="IPR049962">
    <property type="entry name" value="THUMP_ThiI"/>
</dbReference>
<dbReference type="InterPro" id="IPR003720">
    <property type="entry name" value="tRNA_STrfase"/>
</dbReference>
<dbReference type="InterPro" id="IPR050102">
    <property type="entry name" value="tRNA_sulfurtransferase_ThiI"/>
</dbReference>
<dbReference type="NCBIfam" id="TIGR04271">
    <property type="entry name" value="ThiI_C_thiazole"/>
    <property type="match status" value="1"/>
</dbReference>
<dbReference type="NCBIfam" id="TIGR00342">
    <property type="entry name" value="tRNA uracil 4-sulfurtransferase ThiI"/>
    <property type="match status" value="1"/>
</dbReference>
<dbReference type="PANTHER" id="PTHR43209">
    <property type="entry name" value="TRNA SULFURTRANSFERASE"/>
    <property type="match status" value="1"/>
</dbReference>
<dbReference type="PANTHER" id="PTHR43209:SF1">
    <property type="entry name" value="TRNA SULFURTRANSFERASE"/>
    <property type="match status" value="1"/>
</dbReference>
<dbReference type="Pfam" id="PF00581">
    <property type="entry name" value="Rhodanese"/>
    <property type="match status" value="1"/>
</dbReference>
<dbReference type="Pfam" id="PF02568">
    <property type="entry name" value="ThiI"/>
    <property type="match status" value="1"/>
</dbReference>
<dbReference type="Pfam" id="PF22025">
    <property type="entry name" value="ThiI_fer"/>
    <property type="match status" value="1"/>
</dbReference>
<dbReference type="Pfam" id="PF02926">
    <property type="entry name" value="THUMP"/>
    <property type="match status" value="1"/>
</dbReference>
<dbReference type="SMART" id="SM00981">
    <property type="entry name" value="THUMP"/>
    <property type="match status" value="1"/>
</dbReference>
<dbReference type="SUPFAM" id="SSF52402">
    <property type="entry name" value="Adenine nucleotide alpha hydrolases-like"/>
    <property type="match status" value="1"/>
</dbReference>
<dbReference type="SUPFAM" id="SSF52821">
    <property type="entry name" value="Rhodanese/Cell cycle control phosphatase"/>
    <property type="match status" value="1"/>
</dbReference>
<dbReference type="SUPFAM" id="SSF143437">
    <property type="entry name" value="THUMP domain-like"/>
    <property type="match status" value="1"/>
</dbReference>
<dbReference type="PROSITE" id="PS50206">
    <property type="entry name" value="RHODANESE_3"/>
    <property type="match status" value="1"/>
</dbReference>
<dbReference type="PROSITE" id="PS51165">
    <property type="entry name" value="THUMP"/>
    <property type="match status" value="1"/>
</dbReference>
<name>THII_SHEPA</name>
<accession>A8H6W6</accession>
<proteinExistence type="inferred from homology"/>
<organism>
    <name type="scientific">Shewanella pealeana (strain ATCC 700345 / ANG-SQ1)</name>
    <dbReference type="NCBI Taxonomy" id="398579"/>
    <lineage>
        <taxon>Bacteria</taxon>
        <taxon>Pseudomonadati</taxon>
        <taxon>Pseudomonadota</taxon>
        <taxon>Gammaproteobacteria</taxon>
        <taxon>Alteromonadales</taxon>
        <taxon>Shewanellaceae</taxon>
        <taxon>Shewanella</taxon>
    </lineage>
</organism>
<comment type="function">
    <text evidence="1">Catalyzes the ATP-dependent transfer of a sulfur to tRNA to produce 4-thiouridine in position 8 of tRNAs, which functions as a near-UV photosensor. Also catalyzes the transfer of sulfur to the sulfur carrier protein ThiS, forming ThiS-thiocarboxylate. This is a step in the synthesis of thiazole, in the thiamine biosynthesis pathway. The sulfur is donated as persulfide by IscS.</text>
</comment>
<comment type="catalytic activity">
    <reaction evidence="1">
        <text>[ThiI sulfur-carrier protein]-S-sulfanyl-L-cysteine + a uridine in tRNA + 2 reduced [2Fe-2S]-[ferredoxin] + ATP + H(+) = [ThiI sulfur-carrier protein]-L-cysteine + a 4-thiouridine in tRNA + 2 oxidized [2Fe-2S]-[ferredoxin] + AMP + diphosphate</text>
        <dbReference type="Rhea" id="RHEA:24176"/>
        <dbReference type="Rhea" id="RHEA-COMP:10000"/>
        <dbReference type="Rhea" id="RHEA-COMP:10001"/>
        <dbReference type="Rhea" id="RHEA-COMP:13337"/>
        <dbReference type="Rhea" id="RHEA-COMP:13338"/>
        <dbReference type="Rhea" id="RHEA-COMP:13339"/>
        <dbReference type="Rhea" id="RHEA-COMP:13340"/>
        <dbReference type="ChEBI" id="CHEBI:15378"/>
        <dbReference type="ChEBI" id="CHEBI:29950"/>
        <dbReference type="ChEBI" id="CHEBI:30616"/>
        <dbReference type="ChEBI" id="CHEBI:33019"/>
        <dbReference type="ChEBI" id="CHEBI:33737"/>
        <dbReference type="ChEBI" id="CHEBI:33738"/>
        <dbReference type="ChEBI" id="CHEBI:61963"/>
        <dbReference type="ChEBI" id="CHEBI:65315"/>
        <dbReference type="ChEBI" id="CHEBI:136798"/>
        <dbReference type="ChEBI" id="CHEBI:456215"/>
        <dbReference type="EC" id="2.8.1.4"/>
    </reaction>
</comment>
<comment type="catalytic activity">
    <reaction evidence="1">
        <text>[ThiS sulfur-carrier protein]-C-terminal Gly-Gly-AMP + S-sulfanyl-L-cysteinyl-[cysteine desulfurase] + AH2 = [ThiS sulfur-carrier protein]-C-terminal-Gly-aminoethanethioate + L-cysteinyl-[cysteine desulfurase] + A + AMP + 2 H(+)</text>
        <dbReference type="Rhea" id="RHEA:43340"/>
        <dbReference type="Rhea" id="RHEA-COMP:12157"/>
        <dbReference type="Rhea" id="RHEA-COMP:12158"/>
        <dbReference type="Rhea" id="RHEA-COMP:12910"/>
        <dbReference type="Rhea" id="RHEA-COMP:19908"/>
        <dbReference type="ChEBI" id="CHEBI:13193"/>
        <dbReference type="ChEBI" id="CHEBI:15378"/>
        <dbReference type="ChEBI" id="CHEBI:17499"/>
        <dbReference type="ChEBI" id="CHEBI:29950"/>
        <dbReference type="ChEBI" id="CHEBI:61963"/>
        <dbReference type="ChEBI" id="CHEBI:90618"/>
        <dbReference type="ChEBI" id="CHEBI:232372"/>
        <dbReference type="ChEBI" id="CHEBI:456215"/>
    </reaction>
</comment>
<comment type="pathway">
    <text evidence="1">Cofactor biosynthesis; thiamine diphosphate biosynthesis.</text>
</comment>
<comment type="subcellular location">
    <subcellularLocation>
        <location evidence="1">Cytoplasm</location>
    </subcellularLocation>
</comment>
<comment type="similarity">
    <text evidence="1">Belongs to the ThiI family.</text>
</comment>
<reference key="1">
    <citation type="submission" date="2007-10" db="EMBL/GenBank/DDBJ databases">
        <title>Complete sequence of Shewanella pealeana ATCC 700345.</title>
        <authorList>
            <consortium name="US DOE Joint Genome Institute"/>
            <person name="Copeland A."/>
            <person name="Lucas S."/>
            <person name="Lapidus A."/>
            <person name="Barry K."/>
            <person name="Glavina del Rio T."/>
            <person name="Dalin E."/>
            <person name="Tice H."/>
            <person name="Pitluck S."/>
            <person name="Chertkov O."/>
            <person name="Brettin T."/>
            <person name="Bruce D."/>
            <person name="Detter J.C."/>
            <person name="Han C."/>
            <person name="Schmutz J."/>
            <person name="Larimer F."/>
            <person name="Land M."/>
            <person name="Hauser L."/>
            <person name="Kyrpides N."/>
            <person name="Kim E."/>
            <person name="Zhao J.-S.Z."/>
            <person name="Manno D."/>
            <person name="Hawari J."/>
            <person name="Richardson P."/>
        </authorList>
    </citation>
    <scope>NUCLEOTIDE SEQUENCE [LARGE SCALE GENOMIC DNA]</scope>
    <source>
        <strain>ATCC 700345 / ANG-SQ1</strain>
    </source>
</reference>
<evidence type="ECO:0000255" key="1">
    <source>
        <dbReference type="HAMAP-Rule" id="MF_00021"/>
    </source>
</evidence>
<keyword id="KW-0067">ATP-binding</keyword>
<keyword id="KW-0963">Cytoplasm</keyword>
<keyword id="KW-1015">Disulfide bond</keyword>
<keyword id="KW-0547">Nucleotide-binding</keyword>
<keyword id="KW-0676">Redox-active center</keyword>
<keyword id="KW-1185">Reference proteome</keyword>
<keyword id="KW-0694">RNA-binding</keyword>
<keyword id="KW-0784">Thiamine biosynthesis</keyword>
<keyword id="KW-0808">Transferase</keyword>
<keyword id="KW-0820">tRNA-binding</keyword>
<protein>
    <recommendedName>
        <fullName evidence="1">tRNA sulfurtransferase</fullName>
        <ecNumber evidence="1">2.8.1.4</ecNumber>
    </recommendedName>
    <alternativeName>
        <fullName evidence="1">Sulfur carrier protein ThiS sulfurtransferase</fullName>
    </alternativeName>
    <alternativeName>
        <fullName evidence="1">Thiamine biosynthesis protein ThiI</fullName>
    </alternativeName>
    <alternativeName>
        <fullName evidence="1">tRNA 4-thiouridine synthase</fullName>
    </alternativeName>
</protein>